<gene>
    <name evidence="1" type="primary">ileS</name>
    <name type="ordered locus">Sbal223_3235</name>
</gene>
<feature type="chain" id="PRO_1000189194" description="Isoleucine--tRNA ligase">
    <location>
        <begin position="1"/>
        <end position="940"/>
    </location>
</feature>
<feature type="short sequence motif" description="'HIGH' region">
    <location>
        <begin position="58"/>
        <end position="68"/>
    </location>
</feature>
<feature type="short sequence motif" description="'KMSKS' region">
    <location>
        <begin position="605"/>
        <end position="609"/>
    </location>
</feature>
<feature type="binding site" evidence="1">
    <location>
        <position position="564"/>
    </location>
    <ligand>
        <name>L-isoleucyl-5'-AMP</name>
        <dbReference type="ChEBI" id="CHEBI:178002"/>
    </ligand>
</feature>
<feature type="binding site" evidence="1">
    <location>
        <position position="608"/>
    </location>
    <ligand>
        <name>ATP</name>
        <dbReference type="ChEBI" id="CHEBI:30616"/>
    </ligand>
</feature>
<feature type="binding site" evidence="1">
    <location>
        <position position="903"/>
    </location>
    <ligand>
        <name>Zn(2+)</name>
        <dbReference type="ChEBI" id="CHEBI:29105"/>
    </ligand>
</feature>
<feature type="binding site" evidence="1">
    <location>
        <position position="906"/>
    </location>
    <ligand>
        <name>Zn(2+)</name>
        <dbReference type="ChEBI" id="CHEBI:29105"/>
    </ligand>
</feature>
<feature type="binding site" evidence="1">
    <location>
        <position position="923"/>
    </location>
    <ligand>
        <name>Zn(2+)</name>
        <dbReference type="ChEBI" id="CHEBI:29105"/>
    </ligand>
</feature>
<feature type="binding site" evidence="1">
    <location>
        <position position="926"/>
    </location>
    <ligand>
        <name>Zn(2+)</name>
        <dbReference type="ChEBI" id="CHEBI:29105"/>
    </ligand>
</feature>
<accession>B8EFC7</accession>
<comment type="function">
    <text evidence="1">Catalyzes the attachment of isoleucine to tRNA(Ile). As IleRS can inadvertently accommodate and process structurally similar amino acids such as valine, to avoid such errors it has two additional distinct tRNA(Ile)-dependent editing activities. One activity is designated as 'pretransfer' editing and involves the hydrolysis of activated Val-AMP. The other activity is designated 'posttransfer' editing and involves deacylation of mischarged Val-tRNA(Ile).</text>
</comment>
<comment type="catalytic activity">
    <reaction evidence="1">
        <text>tRNA(Ile) + L-isoleucine + ATP = L-isoleucyl-tRNA(Ile) + AMP + diphosphate</text>
        <dbReference type="Rhea" id="RHEA:11060"/>
        <dbReference type="Rhea" id="RHEA-COMP:9666"/>
        <dbReference type="Rhea" id="RHEA-COMP:9695"/>
        <dbReference type="ChEBI" id="CHEBI:30616"/>
        <dbReference type="ChEBI" id="CHEBI:33019"/>
        <dbReference type="ChEBI" id="CHEBI:58045"/>
        <dbReference type="ChEBI" id="CHEBI:78442"/>
        <dbReference type="ChEBI" id="CHEBI:78528"/>
        <dbReference type="ChEBI" id="CHEBI:456215"/>
        <dbReference type="EC" id="6.1.1.5"/>
    </reaction>
</comment>
<comment type="cofactor">
    <cofactor evidence="1">
        <name>Zn(2+)</name>
        <dbReference type="ChEBI" id="CHEBI:29105"/>
    </cofactor>
    <text evidence="1">Binds 1 zinc ion per subunit.</text>
</comment>
<comment type="subunit">
    <text evidence="1">Monomer.</text>
</comment>
<comment type="subcellular location">
    <subcellularLocation>
        <location evidence="1">Cytoplasm</location>
    </subcellularLocation>
</comment>
<comment type="domain">
    <text evidence="1">IleRS has two distinct active sites: one for aminoacylation and one for editing. The misactivated valine is translocated from the active site to the editing site, which sterically excludes the correctly activated isoleucine. The single editing site contains two valyl binding pockets, one specific for each substrate (Val-AMP or Val-tRNA(Ile)).</text>
</comment>
<comment type="similarity">
    <text evidence="1">Belongs to the class-I aminoacyl-tRNA synthetase family. IleS type 1 subfamily.</text>
</comment>
<dbReference type="EC" id="6.1.1.5" evidence="1"/>
<dbReference type="EMBL" id="CP001252">
    <property type="protein sequence ID" value="ACK47719.1"/>
    <property type="molecule type" value="Genomic_DNA"/>
</dbReference>
<dbReference type="RefSeq" id="WP_012588326.1">
    <property type="nucleotide sequence ID" value="NC_011663.1"/>
</dbReference>
<dbReference type="SMR" id="B8EFC7"/>
<dbReference type="KEGG" id="sbp:Sbal223_3235"/>
<dbReference type="HOGENOM" id="CLU_001493_7_1_6"/>
<dbReference type="Proteomes" id="UP000002507">
    <property type="component" value="Chromosome"/>
</dbReference>
<dbReference type="GO" id="GO:0005829">
    <property type="term" value="C:cytosol"/>
    <property type="evidence" value="ECO:0007669"/>
    <property type="project" value="TreeGrafter"/>
</dbReference>
<dbReference type="GO" id="GO:0002161">
    <property type="term" value="F:aminoacyl-tRNA deacylase activity"/>
    <property type="evidence" value="ECO:0007669"/>
    <property type="project" value="InterPro"/>
</dbReference>
<dbReference type="GO" id="GO:0005524">
    <property type="term" value="F:ATP binding"/>
    <property type="evidence" value="ECO:0007669"/>
    <property type="project" value="UniProtKB-UniRule"/>
</dbReference>
<dbReference type="GO" id="GO:0004822">
    <property type="term" value="F:isoleucine-tRNA ligase activity"/>
    <property type="evidence" value="ECO:0007669"/>
    <property type="project" value="UniProtKB-UniRule"/>
</dbReference>
<dbReference type="GO" id="GO:0000049">
    <property type="term" value="F:tRNA binding"/>
    <property type="evidence" value="ECO:0007669"/>
    <property type="project" value="InterPro"/>
</dbReference>
<dbReference type="GO" id="GO:0008270">
    <property type="term" value="F:zinc ion binding"/>
    <property type="evidence" value="ECO:0007669"/>
    <property type="project" value="UniProtKB-UniRule"/>
</dbReference>
<dbReference type="GO" id="GO:0006428">
    <property type="term" value="P:isoleucyl-tRNA aminoacylation"/>
    <property type="evidence" value="ECO:0007669"/>
    <property type="project" value="UniProtKB-UniRule"/>
</dbReference>
<dbReference type="CDD" id="cd07960">
    <property type="entry name" value="Anticodon_Ia_Ile_BEm"/>
    <property type="match status" value="1"/>
</dbReference>
<dbReference type="CDD" id="cd00818">
    <property type="entry name" value="IleRS_core"/>
    <property type="match status" value="1"/>
</dbReference>
<dbReference type="FunFam" id="1.10.730.20:FF:000001">
    <property type="entry name" value="Isoleucine--tRNA ligase"/>
    <property type="match status" value="1"/>
</dbReference>
<dbReference type="FunFam" id="3.40.50.620:FF:000042">
    <property type="entry name" value="Isoleucine--tRNA ligase"/>
    <property type="match status" value="1"/>
</dbReference>
<dbReference type="FunFam" id="3.40.50.620:FF:000048">
    <property type="entry name" value="Isoleucine--tRNA ligase"/>
    <property type="match status" value="1"/>
</dbReference>
<dbReference type="Gene3D" id="1.10.730.20">
    <property type="match status" value="1"/>
</dbReference>
<dbReference type="Gene3D" id="3.40.50.620">
    <property type="entry name" value="HUPs"/>
    <property type="match status" value="2"/>
</dbReference>
<dbReference type="HAMAP" id="MF_02002">
    <property type="entry name" value="Ile_tRNA_synth_type1"/>
    <property type="match status" value="1"/>
</dbReference>
<dbReference type="InterPro" id="IPR001412">
    <property type="entry name" value="aa-tRNA-synth_I_CS"/>
</dbReference>
<dbReference type="InterPro" id="IPR002300">
    <property type="entry name" value="aa-tRNA-synth_Ia"/>
</dbReference>
<dbReference type="InterPro" id="IPR033708">
    <property type="entry name" value="Anticodon_Ile_BEm"/>
</dbReference>
<dbReference type="InterPro" id="IPR002301">
    <property type="entry name" value="Ile-tRNA-ligase"/>
</dbReference>
<dbReference type="InterPro" id="IPR023585">
    <property type="entry name" value="Ile-tRNA-ligase_type1"/>
</dbReference>
<dbReference type="InterPro" id="IPR050081">
    <property type="entry name" value="Ile-tRNA_ligase"/>
</dbReference>
<dbReference type="InterPro" id="IPR013155">
    <property type="entry name" value="M/V/L/I-tRNA-synth_anticd-bd"/>
</dbReference>
<dbReference type="InterPro" id="IPR014729">
    <property type="entry name" value="Rossmann-like_a/b/a_fold"/>
</dbReference>
<dbReference type="InterPro" id="IPR009080">
    <property type="entry name" value="tRNAsynth_Ia_anticodon-bd"/>
</dbReference>
<dbReference type="InterPro" id="IPR009008">
    <property type="entry name" value="Val/Leu/Ile-tRNA-synth_edit"/>
</dbReference>
<dbReference type="InterPro" id="IPR010663">
    <property type="entry name" value="Znf_FPG/IleRS"/>
</dbReference>
<dbReference type="NCBIfam" id="TIGR00392">
    <property type="entry name" value="ileS"/>
    <property type="match status" value="1"/>
</dbReference>
<dbReference type="PANTHER" id="PTHR42765:SF1">
    <property type="entry name" value="ISOLEUCINE--TRNA LIGASE, MITOCHONDRIAL"/>
    <property type="match status" value="1"/>
</dbReference>
<dbReference type="PANTHER" id="PTHR42765">
    <property type="entry name" value="SOLEUCYL-TRNA SYNTHETASE"/>
    <property type="match status" value="1"/>
</dbReference>
<dbReference type="Pfam" id="PF08264">
    <property type="entry name" value="Anticodon_1"/>
    <property type="match status" value="1"/>
</dbReference>
<dbReference type="Pfam" id="PF00133">
    <property type="entry name" value="tRNA-synt_1"/>
    <property type="match status" value="1"/>
</dbReference>
<dbReference type="Pfam" id="PF06827">
    <property type="entry name" value="zf-FPG_IleRS"/>
    <property type="match status" value="1"/>
</dbReference>
<dbReference type="PRINTS" id="PR00984">
    <property type="entry name" value="TRNASYNTHILE"/>
</dbReference>
<dbReference type="SUPFAM" id="SSF47323">
    <property type="entry name" value="Anticodon-binding domain of a subclass of class I aminoacyl-tRNA synthetases"/>
    <property type="match status" value="1"/>
</dbReference>
<dbReference type="SUPFAM" id="SSF52374">
    <property type="entry name" value="Nucleotidylyl transferase"/>
    <property type="match status" value="1"/>
</dbReference>
<dbReference type="SUPFAM" id="SSF50677">
    <property type="entry name" value="ValRS/IleRS/LeuRS editing domain"/>
    <property type="match status" value="1"/>
</dbReference>
<dbReference type="PROSITE" id="PS00178">
    <property type="entry name" value="AA_TRNA_LIGASE_I"/>
    <property type="match status" value="1"/>
</dbReference>
<proteinExistence type="inferred from homology"/>
<name>SYI_SHEB2</name>
<reference key="1">
    <citation type="submission" date="2008-12" db="EMBL/GenBank/DDBJ databases">
        <title>Complete sequence of chromosome of Shewanella baltica OS223.</title>
        <authorList>
            <consortium name="US DOE Joint Genome Institute"/>
            <person name="Lucas S."/>
            <person name="Copeland A."/>
            <person name="Lapidus A."/>
            <person name="Glavina del Rio T."/>
            <person name="Dalin E."/>
            <person name="Tice H."/>
            <person name="Bruce D."/>
            <person name="Goodwin L."/>
            <person name="Pitluck S."/>
            <person name="Chertkov O."/>
            <person name="Meincke L."/>
            <person name="Brettin T."/>
            <person name="Detter J.C."/>
            <person name="Han C."/>
            <person name="Kuske C.R."/>
            <person name="Larimer F."/>
            <person name="Land M."/>
            <person name="Hauser L."/>
            <person name="Kyrpides N."/>
            <person name="Ovchinnikova G."/>
            <person name="Brettar I."/>
            <person name="Rodrigues J."/>
            <person name="Konstantinidis K."/>
            <person name="Tiedje J."/>
        </authorList>
    </citation>
    <scope>NUCLEOTIDE SEQUENCE [LARGE SCALE GENOMIC DNA]</scope>
    <source>
        <strain>OS223</strain>
    </source>
</reference>
<evidence type="ECO:0000255" key="1">
    <source>
        <dbReference type="HAMAP-Rule" id="MF_02002"/>
    </source>
</evidence>
<sequence>MSDYKFTLNLPETEFPMRGNLANREPEMLERWTKDGLYQQIRDSRIGRTPFILHDGPPYANGSIHIGHSVNKILKDIIIKSKTMSGFDAPYVPGWDCHGLPIELKVEQKVGKPGQKISAAEFREECRKYAAEQVNGQREDFIRLGVLGDWQNPYLTMDFSTEANIVRSLSKVIESGHLHKGVKPVHWCTDCGSALAEAEVEYEDKTSPAIDVAFVAADSKAVAAKFGVSDYSHPVSMVIWTTTPWTLPANRALSLSPELDYSLVEFEKDGVTQALILAEVLVESCLTRYNVESHTVLGSAKGAAFELVRFNHPFLDFDVPAILGDHVTTDAGTGIVHTAPGHGQDDFVVGQKYGLEVANPVGDNGVYKPDTEYFAGQHVFKANDNVVALLREKSALLNHVAYRHSYPHCWRHKTPIIFRATPQWFISMDNHGLRTQALKEIEQTQWIPDWGQSRIEKMVENRPDWCISRQRTWGVPITLFVNRETEELHPDSVSLMERVASRIEQQGIQAWWDLDAAELLGDEAEQYRKVTDTLDVWFDSGSTFSSVVAARPEFHGHGVDLYLEGSDQHRGWFMSSLMISTAMNGKAPYKQVLTHGFTVDGKGRKMSKSIGNVIAPQTVTNKLGADILRLWVAATDYSGEMTVSDEILNRSADAYRRIRNTARFLLANLNGFEPAKDLVAVEDMVALDRWVVRRAAALQQEIIEAYEQYNFHIVTQKLMQFCSVELGSFYLDIIKDRQYTAKQEGHARRSCQSALYLISEAMVRWIAPILSFTADEVWQLLPGERDAYVFTQEWYQGLKSVTLATDLSDDYWQQLLTVRNEVNKVIEQARRDKRIGGSLEAEVTLFADAALTEQLTHIGDELRFVLLTSEAKVLPLADATSEAVETELASLKLLVASSTAEKCERCWHHREEVGTIEAHPTLCTRCVTNIEGDGEVRLFA</sequence>
<protein>
    <recommendedName>
        <fullName evidence="1">Isoleucine--tRNA ligase</fullName>
        <ecNumber evidence="1">6.1.1.5</ecNumber>
    </recommendedName>
    <alternativeName>
        <fullName evidence="1">Isoleucyl-tRNA synthetase</fullName>
        <shortName evidence="1">IleRS</shortName>
    </alternativeName>
</protein>
<organism>
    <name type="scientific">Shewanella baltica (strain OS223)</name>
    <dbReference type="NCBI Taxonomy" id="407976"/>
    <lineage>
        <taxon>Bacteria</taxon>
        <taxon>Pseudomonadati</taxon>
        <taxon>Pseudomonadota</taxon>
        <taxon>Gammaproteobacteria</taxon>
        <taxon>Alteromonadales</taxon>
        <taxon>Shewanellaceae</taxon>
        <taxon>Shewanella</taxon>
    </lineage>
</organism>
<keyword id="KW-0030">Aminoacyl-tRNA synthetase</keyword>
<keyword id="KW-0067">ATP-binding</keyword>
<keyword id="KW-0963">Cytoplasm</keyword>
<keyword id="KW-0436">Ligase</keyword>
<keyword id="KW-0479">Metal-binding</keyword>
<keyword id="KW-0547">Nucleotide-binding</keyword>
<keyword id="KW-0648">Protein biosynthesis</keyword>
<keyword id="KW-0862">Zinc</keyword>